<name>Y2024_RHOP2</name>
<accession>Q2IYH8</accession>
<comment type="subcellular location">
    <subcellularLocation>
        <location evidence="1">Cell membrane</location>
        <topology evidence="1">Multi-pass membrane protein</topology>
    </subcellularLocation>
</comment>
<comment type="similarity">
    <text evidence="1">Belongs to the UPF0391 family.</text>
</comment>
<sequence length="57" mass="5915">MLGWVVTFLVVALIAGLLGFGGIAGASIEIAKVIFFIAIVLFLVSAVVGLVRGRTRV</sequence>
<feature type="chain" id="PRO_0000256780" description="UPF0391 membrane protein RPB_2024">
    <location>
        <begin position="1"/>
        <end position="57"/>
    </location>
</feature>
<feature type="transmembrane region" description="Helical" evidence="1">
    <location>
        <begin position="4"/>
        <end position="24"/>
    </location>
</feature>
<feature type="transmembrane region" description="Helical" evidence="1">
    <location>
        <begin position="30"/>
        <end position="50"/>
    </location>
</feature>
<reference key="1">
    <citation type="submission" date="2006-01" db="EMBL/GenBank/DDBJ databases">
        <title>Complete sequence of Rhodopseudomonas palustris HaA2.</title>
        <authorList>
            <consortium name="US DOE Joint Genome Institute"/>
            <person name="Copeland A."/>
            <person name="Lucas S."/>
            <person name="Lapidus A."/>
            <person name="Barry K."/>
            <person name="Detter J.C."/>
            <person name="Glavina T."/>
            <person name="Hammon N."/>
            <person name="Israni S."/>
            <person name="Pitluck S."/>
            <person name="Chain P."/>
            <person name="Malfatti S."/>
            <person name="Shin M."/>
            <person name="Vergez L."/>
            <person name="Schmutz J."/>
            <person name="Larimer F."/>
            <person name="Land M."/>
            <person name="Hauser L."/>
            <person name="Pelletier D.A."/>
            <person name="Kyrpides N."/>
            <person name="Anderson I."/>
            <person name="Oda Y."/>
            <person name="Harwood C.S."/>
            <person name="Richardson P."/>
        </authorList>
    </citation>
    <scope>NUCLEOTIDE SEQUENCE [LARGE SCALE GENOMIC DNA]</scope>
    <source>
        <strain>HaA2</strain>
    </source>
</reference>
<dbReference type="EMBL" id="CP000250">
    <property type="protein sequence ID" value="ABD06732.1"/>
    <property type="molecule type" value="Genomic_DNA"/>
</dbReference>
<dbReference type="RefSeq" id="WP_011440920.1">
    <property type="nucleotide sequence ID" value="NC_007778.1"/>
</dbReference>
<dbReference type="STRING" id="316058.RPB_2024"/>
<dbReference type="KEGG" id="rpb:RPB_2024"/>
<dbReference type="eggNOG" id="COG5487">
    <property type="taxonomic scope" value="Bacteria"/>
</dbReference>
<dbReference type="HOGENOM" id="CLU_187346_2_1_5"/>
<dbReference type="OrthoDB" id="1374391at2"/>
<dbReference type="Proteomes" id="UP000008809">
    <property type="component" value="Chromosome"/>
</dbReference>
<dbReference type="GO" id="GO:0005886">
    <property type="term" value="C:plasma membrane"/>
    <property type="evidence" value="ECO:0007669"/>
    <property type="project" value="UniProtKB-SubCell"/>
</dbReference>
<dbReference type="HAMAP" id="MF_01361">
    <property type="entry name" value="UPF0391"/>
    <property type="match status" value="1"/>
</dbReference>
<dbReference type="InterPro" id="IPR009760">
    <property type="entry name" value="DUF1328"/>
</dbReference>
<dbReference type="NCBIfam" id="NF010228">
    <property type="entry name" value="PRK13682.1-3"/>
    <property type="match status" value="1"/>
</dbReference>
<dbReference type="NCBIfam" id="NF010229">
    <property type="entry name" value="PRK13682.1-4"/>
    <property type="match status" value="1"/>
</dbReference>
<dbReference type="Pfam" id="PF07043">
    <property type="entry name" value="DUF1328"/>
    <property type="match status" value="1"/>
</dbReference>
<dbReference type="PIRSF" id="PIRSF036466">
    <property type="entry name" value="UCP036466"/>
    <property type="match status" value="1"/>
</dbReference>
<organism>
    <name type="scientific">Rhodopseudomonas palustris (strain HaA2)</name>
    <dbReference type="NCBI Taxonomy" id="316058"/>
    <lineage>
        <taxon>Bacteria</taxon>
        <taxon>Pseudomonadati</taxon>
        <taxon>Pseudomonadota</taxon>
        <taxon>Alphaproteobacteria</taxon>
        <taxon>Hyphomicrobiales</taxon>
        <taxon>Nitrobacteraceae</taxon>
        <taxon>Rhodopseudomonas</taxon>
    </lineage>
</organism>
<protein>
    <recommendedName>
        <fullName evidence="1">UPF0391 membrane protein RPB_2024</fullName>
    </recommendedName>
</protein>
<evidence type="ECO:0000255" key="1">
    <source>
        <dbReference type="HAMAP-Rule" id="MF_01361"/>
    </source>
</evidence>
<proteinExistence type="inferred from homology"/>
<keyword id="KW-1003">Cell membrane</keyword>
<keyword id="KW-0472">Membrane</keyword>
<keyword id="KW-1185">Reference proteome</keyword>
<keyword id="KW-0812">Transmembrane</keyword>
<keyword id="KW-1133">Transmembrane helix</keyword>
<gene>
    <name type="ordered locus">RPB_2024</name>
</gene>